<comment type="function">
    <text evidence="1 2">Secreted protein that acts as a key regulator of lysosomal function and as a growth factor involved in inflammation, wound healing and cell proliferation (By similarity). Regulates protein trafficking to lysosomes, and also the activity of lysosomal enzymes (By similarity). Also facilitates the acidification of lysosomes, causing degradation of mature CTSD by CTSB (By similarity). In addition, functions as a wound-related growth factor that acts directly on dermal fibroblasts and endothelial cells to promote division, migration and the formation of capillary-like tubule structures (By similarity). Also promotes epithelial cell proliferation by blocking TNF-mediated neutrophil activation preventing release of oxidants and proteases (By similarity). Moreover, modulates inflammation in neurons by preserving neurons survival, axonal outgrowth and neuronal integrity (By similarity).</text>
</comment>
<comment type="function">
    <molecule>Granulin-3</molecule>
    <text evidence="2">Inhibits epithelial cell proliferation and induces epithelial cells to secrete IL-8.</text>
</comment>
<comment type="function">
    <molecule>Granulin-7</molecule>
    <text evidence="2">Stabilizes CTSD through interaction with CTSD leading to maintain its aspartic-type peptidase activity.</text>
</comment>
<comment type="subunit">
    <text evidence="2">Progranulin is secreted as a homodimer. Interacts with SLPI; interaction protects progranulin from proteolysis. Interacts (via region corresponding to granulin-7 peptide) with CTSD; stabilizes CTSD and increases its proteolytic activity. Interacts (via region corresponding to granulin-7 peptide) with SORT1; this interaction mediates endocytosis and lysosome delivery of progranulin; interaction occurs at the neuronal cell surface in a stressed nervous system. Interacts with PSAP; facilitates lysosomal delivery of progranulin from the extracellular space and the biosynthetic pathway. Forms a complex with PSAP and M6PR; PSAP bridges the binding between progranulin and M6PR. Forms a complex with PSAP and SORT1; progranulin bridges the interaction between PSAP and SORT1; facilitates lysosomal targeting of PSAP via SORT1; interaction enhances PSAP uptake in primary cortical neurons. Interacts (via regions corresponding to granulin-2 and granulin-7 peptides) with GBA1; this interaction prevents aggregation of GBA1-SCARB2 complex via interaction with HSPA1A upon stress. Interacts (via region corresponding to granulin-7 peptide) with HSPA1A; mediates recruitment of HSPA1A to GBA1 and prevents GBA1 aggregation in response to stress.</text>
</comment>
<comment type="subcellular location">
    <subcellularLocation>
        <location evidence="2">Secreted</location>
    </subcellularLocation>
    <subcellularLocation>
        <location evidence="2">Lysosome</location>
    </subcellularLocation>
    <text evidence="1 2">Endocytosed by SORT1 and delivred to lysosomes. Targeted to lysosome by PSAP via M6PR and LRP1, in both biosynthetic and endocytic pathways (By similarity). Co-localized with GBA1 in the intracellular trafficking compartments until to lysosome (By similarity).</text>
</comment>
<comment type="PTM">
    <text evidence="2">Cleaved by ELANE; proteolysis is blocked by SLPI and is concentration- and time-dependent and induces CXCL8/IL-8 production; granulin-3 and granulin-4 are resistant to ELANE. Cleaved by CTSL in lysosome thus regulating the maturation and turnover of progranulin within the lysosome.</text>
</comment>
<comment type="similarity">
    <text evidence="7">Belongs to the granulin family.</text>
</comment>
<evidence type="ECO:0000250" key="1">
    <source>
        <dbReference type="UniProtKB" id="P28798"/>
    </source>
</evidence>
<evidence type="ECO:0000250" key="2">
    <source>
        <dbReference type="UniProtKB" id="P28799"/>
    </source>
</evidence>
<evidence type="ECO:0000255" key="3"/>
<evidence type="ECO:0000256" key="4">
    <source>
        <dbReference type="SAM" id="MobiDB-lite"/>
    </source>
</evidence>
<evidence type="ECO:0000269" key="5">
    <source>
    </source>
</evidence>
<evidence type="ECO:0000303" key="6">
    <source>
    </source>
</evidence>
<evidence type="ECO:0000305" key="7"/>
<protein>
    <recommendedName>
        <fullName evidence="2">Progranulin</fullName>
        <shortName evidence="2">PGRN</shortName>
    </recommendedName>
    <alternativeName>
        <fullName evidence="6">Acrogranin</fullName>
    </alternativeName>
    <alternativeName>
        <fullName evidence="2">Proepithelin</fullName>
        <shortName evidence="2">PEPI</shortName>
    </alternativeName>
    <component>
        <recommendedName>
            <fullName>Paragranulin</fullName>
        </recommendedName>
    </component>
    <component>
        <recommendedName>
            <fullName>Granulin-1</fullName>
        </recommendedName>
    </component>
    <component>
        <recommendedName>
            <fullName>Granulin-2</fullName>
        </recommendedName>
    </component>
    <component>
        <recommendedName>
            <fullName>Granulin-3</fullName>
        </recommendedName>
    </component>
    <component>
        <recommendedName>
            <fullName>Granulin-4</fullName>
        </recommendedName>
    </component>
    <component>
        <recommendedName>
            <fullName>Granulin-5</fullName>
        </recommendedName>
    </component>
    <component>
        <recommendedName>
            <fullName>Granulin-6</fullName>
        </recommendedName>
    </component>
    <component>
        <recommendedName>
            <fullName>Granulin-7</fullName>
        </recommendedName>
    </component>
</protein>
<keyword id="KW-0202">Cytokine</keyword>
<keyword id="KW-0903">Direct protein sequencing</keyword>
<keyword id="KW-1015">Disulfide bond</keyword>
<keyword id="KW-0325">Glycoprotein</keyword>
<keyword id="KW-0458">Lysosome</keyword>
<keyword id="KW-1185">Reference proteome</keyword>
<keyword id="KW-0677">Repeat</keyword>
<keyword id="KW-0964">Secreted</keyword>
<keyword id="KW-0732">Signal</keyword>
<organism>
    <name type="scientific">Cavia porcellus</name>
    <name type="common">Guinea pig</name>
    <dbReference type="NCBI Taxonomy" id="10141"/>
    <lineage>
        <taxon>Eukaryota</taxon>
        <taxon>Metazoa</taxon>
        <taxon>Chordata</taxon>
        <taxon>Craniata</taxon>
        <taxon>Vertebrata</taxon>
        <taxon>Euteleostomi</taxon>
        <taxon>Mammalia</taxon>
        <taxon>Eutheria</taxon>
        <taxon>Euarchontoglires</taxon>
        <taxon>Glires</taxon>
        <taxon>Rodentia</taxon>
        <taxon>Hystricomorpha</taxon>
        <taxon>Caviidae</taxon>
        <taxon>Cavia</taxon>
    </lineage>
</organism>
<sequence>MWTLVGWTILVAGLVAGIRCPDDQVCPVACCPDSGGASYSCCDPGVDLRTTALSGYLGRPCQSPANCPIGHSCVLTAAGTAACCPFSQAMACGDGHHCCPYGFHCSTDGGTCIQRPDIHLLGAVQCPGGEFECPDSSTCCHMLDGSWGCCPMPQASCCEDRVHCCPHGASCDLVHIRCVTALGSHPLTTKLPAQRTNYTGAEGTPVVSPGLLPAALPTSVICPDSRSQCPDDTTCCLLASGEYGCCPMPNAICCSDHLHCCPQDTVCDLRQSRCLSQNKAKTLLTKLPSWTVWDVECDQEVSCPEGQTCCRLQSGKWGCCPFPKAVCCEDHVHCCPEGFRCHTEKDTCEQGLLQVPWAQKTPAQPSRPSQPSPPGPPGPPSPPGPLRSEISCDEVVSCAPGNICCRLASGEWGCCPSSEGYLCMAGERCQVGDRLAPEKMAAHLMSLSQTTDVGCDQHASCPVGQTCCPKLGGGWACCQLPHAVCCEDGQHCCPAGYTCNVKARSCEKAADGAHLAAPLAVGSTGGVMDVACGDRHFCHDEQTCCRDSRGGWACCPFHQGVCCKDQRHCCPAGFHCESQGTRCVHKKSLLHWDSLPRPAAPRPRL</sequence>
<accession>P28797</accession>
<accession>H0VD49</accession>
<dbReference type="EMBL" id="AAKN02045624">
    <property type="status" value="NOT_ANNOTATED_CDS"/>
    <property type="molecule type" value="Genomic_DNA"/>
</dbReference>
<dbReference type="EMBL" id="M86735">
    <property type="protein sequence ID" value="AAA37030.1"/>
    <property type="molecule type" value="mRNA"/>
</dbReference>
<dbReference type="PIR" id="I48141">
    <property type="entry name" value="I48141"/>
</dbReference>
<dbReference type="SMR" id="P28797"/>
<dbReference type="FunCoup" id="P28797">
    <property type="interactions" value="415"/>
</dbReference>
<dbReference type="STRING" id="10141.ENSCPOP00000007890"/>
<dbReference type="GlyCosmos" id="P28797">
    <property type="glycosylation" value="1 site, No reported glycans"/>
</dbReference>
<dbReference type="Ensembl" id="ENSCPOT00000008867.3">
    <property type="protein sequence ID" value="ENSCPOP00000007890.3"/>
    <property type="gene ID" value="ENSCPOG00000008789.4"/>
</dbReference>
<dbReference type="VEuPathDB" id="HostDB:ENSCPOG00000008789"/>
<dbReference type="eggNOG" id="KOG4296">
    <property type="taxonomic scope" value="Eukaryota"/>
</dbReference>
<dbReference type="GeneTree" id="ENSGT00470000042293"/>
<dbReference type="HOGENOM" id="CLU_026274_0_0_1"/>
<dbReference type="InParanoid" id="P28797"/>
<dbReference type="OMA" id="CCPYSSA"/>
<dbReference type="TreeFam" id="TF319678"/>
<dbReference type="Proteomes" id="UP000005447">
    <property type="component" value="Unassembled WGS sequence"/>
</dbReference>
<dbReference type="Bgee" id="ENSCPOG00000008789">
    <property type="expression patterns" value="Expressed in testis and 13 other cell types or tissues"/>
</dbReference>
<dbReference type="GO" id="GO:0150053">
    <property type="term" value="C:cerebellar climbing fiber to Purkinje cell synapse"/>
    <property type="evidence" value="ECO:0007669"/>
    <property type="project" value="Ensembl"/>
</dbReference>
<dbReference type="GO" id="GO:0005783">
    <property type="term" value="C:endoplasmic reticulum"/>
    <property type="evidence" value="ECO:0000250"/>
    <property type="project" value="UniProtKB"/>
</dbReference>
<dbReference type="GO" id="GO:0005576">
    <property type="term" value="C:extracellular region"/>
    <property type="evidence" value="ECO:0000250"/>
    <property type="project" value="UniProtKB"/>
</dbReference>
<dbReference type="GO" id="GO:0005615">
    <property type="term" value="C:extracellular space"/>
    <property type="evidence" value="ECO:0007669"/>
    <property type="project" value="UniProtKB-KW"/>
</dbReference>
<dbReference type="GO" id="GO:0005794">
    <property type="term" value="C:Golgi apparatus"/>
    <property type="evidence" value="ECO:0000250"/>
    <property type="project" value="UniProtKB"/>
</dbReference>
<dbReference type="GO" id="GO:0005770">
    <property type="term" value="C:late endosome"/>
    <property type="evidence" value="ECO:0000250"/>
    <property type="project" value="UniProtKB"/>
</dbReference>
<dbReference type="GO" id="GO:0005765">
    <property type="term" value="C:lysosomal membrane"/>
    <property type="evidence" value="ECO:0000250"/>
    <property type="project" value="UniProtKB"/>
</dbReference>
<dbReference type="GO" id="GO:0005764">
    <property type="term" value="C:lysosome"/>
    <property type="evidence" value="ECO:0000250"/>
    <property type="project" value="UniProtKB"/>
</dbReference>
<dbReference type="GO" id="GO:0016020">
    <property type="term" value="C:membrane"/>
    <property type="evidence" value="ECO:0000250"/>
    <property type="project" value="UniProtKB"/>
</dbReference>
<dbReference type="GO" id="GO:0005886">
    <property type="term" value="C:plasma membrane"/>
    <property type="evidence" value="ECO:0000250"/>
    <property type="project" value="UniProtKB"/>
</dbReference>
<dbReference type="GO" id="GO:0005802">
    <property type="term" value="C:trans-Golgi network"/>
    <property type="evidence" value="ECO:0000250"/>
    <property type="project" value="UniProtKB"/>
</dbReference>
<dbReference type="GO" id="GO:0031982">
    <property type="term" value="C:vesicle"/>
    <property type="evidence" value="ECO:0000250"/>
    <property type="project" value="UniProtKB"/>
</dbReference>
<dbReference type="GO" id="GO:0005125">
    <property type="term" value="F:cytokine activity"/>
    <property type="evidence" value="ECO:0007669"/>
    <property type="project" value="UniProtKB-KW"/>
</dbReference>
<dbReference type="GO" id="GO:0051087">
    <property type="term" value="F:protein-folding chaperone binding"/>
    <property type="evidence" value="ECO:0000250"/>
    <property type="project" value="UniProtKB"/>
</dbReference>
<dbReference type="GO" id="GO:0002265">
    <property type="term" value="P:astrocyte activation involved in immune response"/>
    <property type="evidence" value="ECO:0000250"/>
    <property type="project" value="UniProtKB"/>
</dbReference>
<dbReference type="GO" id="GO:0001835">
    <property type="term" value="P:blastocyst hatching"/>
    <property type="evidence" value="ECO:0007669"/>
    <property type="project" value="Ensembl"/>
</dbReference>
<dbReference type="GO" id="GO:0007566">
    <property type="term" value="P:embryo implantation"/>
    <property type="evidence" value="ECO:0007669"/>
    <property type="project" value="Ensembl"/>
</dbReference>
<dbReference type="GO" id="GO:0050673">
    <property type="term" value="P:epithelial cell proliferation"/>
    <property type="evidence" value="ECO:0007669"/>
    <property type="project" value="Ensembl"/>
</dbReference>
<dbReference type="GO" id="GO:0035641">
    <property type="term" value="P:locomotory exploration behavior"/>
    <property type="evidence" value="ECO:0007669"/>
    <property type="project" value="Ensembl"/>
</dbReference>
<dbReference type="GO" id="GO:0007042">
    <property type="term" value="P:lysosomal lumen acidification"/>
    <property type="evidence" value="ECO:0000250"/>
    <property type="project" value="UniProtKB"/>
</dbReference>
<dbReference type="GO" id="GO:1905146">
    <property type="term" value="P:lysosomal protein catabolic process"/>
    <property type="evidence" value="ECO:0007669"/>
    <property type="project" value="Ensembl"/>
</dbReference>
<dbReference type="GO" id="GO:0007041">
    <property type="term" value="P:lysosomal transport"/>
    <property type="evidence" value="ECO:0000250"/>
    <property type="project" value="UniProtKB"/>
</dbReference>
<dbReference type="GO" id="GO:0007040">
    <property type="term" value="P:lysosome organization"/>
    <property type="evidence" value="ECO:0000250"/>
    <property type="project" value="UniProtKB"/>
</dbReference>
<dbReference type="GO" id="GO:0099558">
    <property type="term" value="P:maintenance of synapse structure"/>
    <property type="evidence" value="ECO:0007669"/>
    <property type="project" value="Ensembl"/>
</dbReference>
<dbReference type="GO" id="GO:0002282">
    <property type="term" value="P:microglial cell activation involved in immune response"/>
    <property type="evidence" value="ECO:0000250"/>
    <property type="project" value="UniProtKB"/>
</dbReference>
<dbReference type="GO" id="GO:0050728">
    <property type="term" value="P:negative regulation of inflammatory response"/>
    <property type="evidence" value="ECO:0000250"/>
    <property type="project" value="UniProtKB"/>
</dbReference>
<dbReference type="GO" id="GO:0045824">
    <property type="term" value="P:negative regulation of innate immune response"/>
    <property type="evidence" value="ECO:0000250"/>
    <property type="project" value="UniProtKB"/>
</dbReference>
<dbReference type="GO" id="GO:1903979">
    <property type="term" value="P:negative regulation of microglial cell activation"/>
    <property type="evidence" value="ECO:0000250"/>
    <property type="project" value="UniProtKB"/>
</dbReference>
<dbReference type="GO" id="GO:0043524">
    <property type="term" value="P:negative regulation of neuron apoptotic process"/>
    <property type="evidence" value="ECO:0000250"/>
    <property type="project" value="UniProtKB"/>
</dbReference>
<dbReference type="GO" id="GO:1902564">
    <property type="term" value="P:negative regulation of neutrophil activation"/>
    <property type="evidence" value="ECO:0000250"/>
    <property type="project" value="UniProtKB"/>
</dbReference>
<dbReference type="GO" id="GO:0060266">
    <property type="term" value="P:negative regulation of respiratory burst involved in inflammatory response"/>
    <property type="evidence" value="ECO:0000250"/>
    <property type="project" value="UniProtKB"/>
</dbReference>
<dbReference type="GO" id="GO:0045766">
    <property type="term" value="P:positive regulation of angiogenesis"/>
    <property type="evidence" value="ECO:0000250"/>
    <property type="project" value="UniProtKB"/>
</dbReference>
<dbReference type="GO" id="GO:1905247">
    <property type="term" value="P:positive regulation of aspartic-type peptidase activity"/>
    <property type="evidence" value="ECO:0000250"/>
    <property type="project" value="UniProtKB"/>
</dbReference>
<dbReference type="GO" id="GO:0048680">
    <property type="term" value="P:positive regulation of axon regeneration"/>
    <property type="evidence" value="ECO:0000250"/>
    <property type="project" value="UniProtKB"/>
</dbReference>
<dbReference type="GO" id="GO:0008284">
    <property type="term" value="P:positive regulation of cell population proliferation"/>
    <property type="evidence" value="ECO:0000250"/>
    <property type="project" value="UniProtKB"/>
</dbReference>
<dbReference type="GO" id="GO:1900426">
    <property type="term" value="P:positive regulation of defense response to bacterium"/>
    <property type="evidence" value="ECO:0000250"/>
    <property type="project" value="UniProtKB"/>
</dbReference>
<dbReference type="GO" id="GO:0010595">
    <property type="term" value="P:positive regulation of endothelial cell migration"/>
    <property type="evidence" value="ECO:0000250"/>
    <property type="project" value="UniProtKB"/>
</dbReference>
<dbReference type="GO" id="GO:0050679">
    <property type="term" value="P:positive regulation of epithelial cell proliferation"/>
    <property type="evidence" value="ECO:0000250"/>
    <property type="project" value="UniProtKB"/>
</dbReference>
<dbReference type="GO" id="GO:0106016">
    <property type="term" value="P:positive regulation of inflammatory response to wounding"/>
    <property type="evidence" value="ECO:0000250"/>
    <property type="project" value="UniProtKB"/>
</dbReference>
<dbReference type="GO" id="GO:1905673">
    <property type="term" value="P:positive regulation of lysosome organization"/>
    <property type="evidence" value="ECO:0000250"/>
    <property type="project" value="UniProtKB"/>
</dbReference>
<dbReference type="GO" id="GO:0043525">
    <property type="term" value="P:positive regulation of neuron apoptotic process"/>
    <property type="evidence" value="ECO:0000250"/>
    <property type="project" value="UniProtKB"/>
</dbReference>
<dbReference type="GO" id="GO:1903334">
    <property type="term" value="P:positive regulation of protein folding"/>
    <property type="evidence" value="ECO:0000250"/>
    <property type="project" value="UniProtKB"/>
</dbReference>
<dbReference type="GO" id="GO:1904075">
    <property type="term" value="P:positive regulation of trophectodermal cell proliferation"/>
    <property type="evidence" value="ECO:0007669"/>
    <property type="project" value="Ensembl"/>
</dbReference>
<dbReference type="GO" id="GO:0050821">
    <property type="term" value="P:protein stabilization"/>
    <property type="evidence" value="ECO:0000250"/>
    <property type="project" value="UniProtKB"/>
</dbReference>
<dbReference type="GO" id="GO:0060041">
    <property type="term" value="P:retina development in camera-type eye"/>
    <property type="evidence" value="ECO:0007669"/>
    <property type="project" value="Ensembl"/>
</dbReference>
<dbReference type="GO" id="GO:0001834">
    <property type="term" value="P:trophectodermal cell proliferation"/>
    <property type="evidence" value="ECO:0007669"/>
    <property type="project" value="Ensembl"/>
</dbReference>
<dbReference type="FunFam" id="2.10.25.160:FF:000001">
    <property type="entry name" value="Granulin precursor"/>
    <property type="match status" value="4"/>
</dbReference>
<dbReference type="FunFam" id="2.10.25.160:FF:000004">
    <property type="entry name" value="Granulin precursor"/>
    <property type="match status" value="1"/>
</dbReference>
<dbReference type="Gene3D" id="2.10.25.160">
    <property type="entry name" value="Granulin"/>
    <property type="match status" value="7"/>
</dbReference>
<dbReference type="InterPro" id="IPR000118">
    <property type="entry name" value="Granulin"/>
</dbReference>
<dbReference type="InterPro" id="IPR039036">
    <property type="entry name" value="Granulin_fam"/>
</dbReference>
<dbReference type="InterPro" id="IPR037277">
    <property type="entry name" value="Granulin_sf"/>
</dbReference>
<dbReference type="PANTHER" id="PTHR12274">
    <property type="entry name" value="GRANULIN"/>
    <property type="match status" value="1"/>
</dbReference>
<dbReference type="PANTHER" id="PTHR12274:SF3">
    <property type="entry name" value="PROGRANULIN"/>
    <property type="match status" value="1"/>
</dbReference>
<dbReference type="Pfam" id="PF00396">
    <property type="entry name" value="Granulin"/>
    <property type="match status" value="6"/>
</dbReference>
<dbReference type="SMART" id="SM00277">
    <property type="entry name" value="GRAN"/>
    <property type="match status" value="7"/>
</dbReference>
<dbReference type="SUPFAM" id="SSF57277">
    <property type="entry name" value="Granulin repeat"/>
    <property type="match status" value="6"/>
</dbReference>
<dbReference type="PROSITE" id="PS00799">
    <property type="entry name" value="GRANULINS"/>
    <property type="match status" value="6"/>
</dbReference>
<feature type="signal peptide" evidence="5">
    <location>
        <begin position="1"/>
        <end position="17"/>
    </location>
</feature>
<feature type="chain" id="PRO_0000012685" description="Progranulin">
    <location>
        <begin position="18"/>
        <end position="605"/>
    </location>
</feature>
<feature type="peptide" id="PRO_0000446330" description="Paragranulin" evidence="2">
    <location>
        <begin position="18"/>
        <end position="47"/>
    </location>
</feature>
<feature type="peptide" id="PRO_0000012686" description="Granulin-1">
    <location>
        <begin position="67" status="uncertain"/>
        <end position="112" status="uncertain"/>
    </location>
</feature>
<feature type="peptide" id="PRO_0000012687" description="Granulin-2">
    <location>
        <begin position="125" status="uncertain"/>
        <end position="178" status="uncertain"/>
    </location>
</feature>
<feature type="peptide" id="PRO_0000012688" description="Granulin-3">
    <location>
        <begin position="220"/>
        <end position="275"/>
    </location>
</feature>
<feature type="peptide" id="PRO_0000012689" description="Granulin-4">
    <location>
        <begin position="295"/>
        <end position="349"/>
    </location>
</feature>
<feature type="peptide" id="PRO_0000012690" description="Granulin-5">
    <location>
        <begin position="390" status="uncertain"/>
        <end position="429" status="uncertain"/>
    </location>
</feature>
<feature type="peptide" id="PRO_0000012691" description="Granulin-6">
    <location>
        <begin position="453"/>
        <end position="508" status="uncertain"/>
    </location>
</feature>
<feature type="peptide" id="PRO_0000012692" description="Granulin-7">
    <location>
        <begin position="532" status="uncertain"/>
        <end position="583" status="uncertain"/>
    </location>
</feature>
<feature type="region of interest" description="Disordered" evidence="4">
    <location>
        <begin position="359"/>
        <end position="386"/>
    </location>
</feature>
<feature type="compositionally biased region" description="Pro residues" evidence="4">
    <location>
        <begin position="368"/>
        <end position="385"/>
    </location>
</feature>
<feature type="glycosylation site" description="N-linked (GlcNAc...) asparagine" evidence="3">
    <location>
        <position position="197"/>
    </location>
</feature>
<feature type="disulfide bond" evidence="2">
    <location>
        <begin position="126"/>
        <end position="139"/>
    </location>
</feature>
<feature type="disulfide bond" evidence="2">
    <location>
        <begin position="133"/>
        <end position="149"/>
    </location>
</feature>
<feature type="disulfide bond" evidence="2">
    <location>
        <begin position="297"/>
        <end position="309"/>
    </location>
</feature>
<feature type="disulfide bond" evidence="2">
    <location>
        <begin position="303"/>
        <end position="319"/>
    </location>
</feature>
<feature type="disulfide bond" evidence="2">
    <location>
        <begin position="310"/>
        <end position="327"/>
    </location>
</feature>
<feature type="disulfide bond" evidence="2">
    <location>
        <begin position="320"/>
        <end position="334"/>
    </location>
</feature>
<feature type="disulfide bond" evidence="2">
    <location>
        <begin position="328"/>
        <end position="341"/>
    </location>
</feature>
<feature type="disulfide bond" evidence="2">
    <location>
        <begin position="335"/>
        <end position="348"/>
    </location>
</feature>
<feature type="disulfide bond" evidence="2">
    <location>
        <begin position="392"/>
        <end position="404"/>
    </location>
</feature>
<feature type="disulfide bond" evidence="2">
    <location>
        <begin position="398"/>
        <end position="414"/>
    </location>
</feature>
<feature type="sequence conflict" description="In Ref. 2; AAA37030." evidence="7" ref="2">
    <original>G</original>
    <variation>R</variation>
    <location>
        <position position="338"/>
    </location>
</feature>
<feature type="sequence conflict" description="In Ref. 2; AAA37030." evidence="7" ref="2">
    <original>A</original>
    <variation>R</variation>
    <location>
        <position position="399"/>
    </location>
</feature>
<feature type="sequence conflict" description="In Ref. 2; AAA37030." evidence="7" ref="2">
    <original>G</original>
    <variation>R</variation>
    <location>
        <position position="464"/>
    </location>
</feature>
<reference key="1">
    <citation type="journal article" date="2011" name="Nature">
        <title>A high-resolution map of human evolutionary constraint using 29 mammals.</title>
        <authorList>
            <person name="Lindblad-Toh K."/>
            <person name="Garber M."/>
            <person name="Zuk O."/>
            <person name="Lin M.F."/>
            <person name="Parker B.J."/>
            <person name="Washietl S."/>
            <person name="Kheradpour P."/>
            <person name="Ernst J."/>
            <person name="Jordan G."/>
            <person name="Mauceli E."/>
            <person name="Ward L.D."/>
            <person name="Lowe C.B."/>
            <person name="Holloway A.K."/>
            <person name="Clamp M."/>
            <person name="Gnerre S."/>
            <person name="Alfoldi J."/>
            <person name="Beal K."/>
            <person name="Chang J."/>
            <person name="Clawson H."/>
            <person name="Cuff J."/>
            <person name="Di Palma F."/>
            <person name="Fitzgerald S."/>
            <person name="Flicek P."/>
            <person name="Guttman M."/>
            <person name="Hubisz M.J."/>
            <person name="Jaffe D.B."/>
            <person name="Jungreis I."/>
            <person name="Kent W.J."/>
            <person name="Kostka D."/>
            <person name="Lara M."/>
            <person name="Martins A.L."/>
            <person name="Massingham T."/>
            <person name="Moltke I."/>
            <person name="Raney B.J."/>
            <person name="Rasmussen M.D."/>
            <person name="Robinson J."/>
            <person name="Stark A."/>
            <person name="Vilella A.J."/>
            <person name="Wen J."/>
            <person name="Xie X."/>
            <person name="Zody M.C."/>
            <person name="Baldwin J."/>
            <person name="Bloom T."/>
            <person name="Chin C.W."/>
            <person name="Heiman D."/>
            <person name="Nicol R."/>
            <person name="Nusbaum C."/>
            <person name="Young S."/>
            <person name="Wilkinson J."/>
            <person name="Worley K.C."/>
            <person name="Kovar C.L."/>
            <person name="Muzny D.M."/>
            <person name="Gibbs R.A."/>
            <person name="Cree A."/>
            <person name="Dihn H.H."/>
            <person name="Fowler G."/>
            <person name="Jhangiani S."/>
            <person name="Joshi V."/>
            <person name="Lee S."/>
            <person name="Lewis L.R."/>
            <person name="Nazareth L.V."/>
            <person name="Okwuonu G."/>
            <person name="Santibanez J."/>
            <person name="Warren W.C."/>
            <person name="Mardis E.R."/>
            <person name="Weinstock G.M."/>
            <person name="Wilson R.K."/>
            <person name="Delehaunty K."/>
            <person name="Dooling D."/>
            <person name="Fronik C."/>
            <person name="Fulton L."/>
            <person name="Fulton B."/>
            <person name="Graves T."/>
            <person name="Minx P."/>
            <person name="Sodergren E."/>
            <person name="Birney E."/>
            <person name="Margulies E.H."/>
            <person name="Herrero J."/>
            <person name="Green E.D."/>
            <person name="Haussler D."/>
            <person name="Siepel A."/>
            <person name="Goldman N."/>
            <person name="Pollard K.S."/>
            <person name="Pedersen J.S."/>
            <person name="Lander E.S."/>
            <person name="Kellis M."/>
        </authorList>
    </citation>
    <scope>NUCLEOTIDE SEQUENCE [LARGE SCALE GENOMIC DNA]</scope>
    <source>
        <strain>2N</strain>
    </source>
</reference>
<reference key="2">
    <citation type="journal article" date="1993" name="Mol. Reprod. Dev.">
        <title>Acrogranin, an acrosomal cysteine-rich glycoprotein, is the precursor of the growth-modulating peptides, granulins, and epithelins, and is expressed in somatic as well as male germ cells.</title>
        <authorList>
            <person name="Baba T."/>
            <person name="Hoff H.B. III"/>
            <person name="Nemoto H."/>
            <person name="Lee H."/>
            <person name="Orth J."/>
            <person name="Arai Y."/>
            <person name="Gerton G.L."/>
        </authorList>
    </citation>
    <scope>NUCLEOTIDE SEQUENCE [MRNA] OF 11-605</scope>
    <scope>PROTEIN SEQUENCE OF 18-35</scope>
    <source>
        <tissue>Testis</tissue>
    </source>
</reference>
<name>GRN_CAVPO</name>
<proteinExistence type="evidence at protein level"/>
<gene>
    <name type="primary">GRN</name>
</gene>